<dbReference type="EC" id="2.1.2.1" evidence="1"/>
<dbReference type="EMBL" id="AP008229">
    <property type="protein sequence ID" value="BAE70394.1"/>
    <property type="molecule type" value="Genomic_DNA"/>
</dbReference>
<dbReference type="RefSeq" id="WP_011260263.1">
    <property type="nucleotide sequence ID" value="NC_007705.1"/>
</dbReference>
<dbReference type="SMR" id="Q2NZ83"/>
<dbReference type="KEGG" id="xom:XOO3639"/>
<dbReference type="HOGENOM" id="CLU_022477_2_1_6"/>
<dbReference type="UniPathway" id="UPA00193"/>
<dbReference type="UniPathway" id="UPA00288">
    <property type="reaction ID" value="UER01023"/>
</dbReference>
<dbReference type="GO" id="GO:0005829">
    <property type="term" value="C:cytosol"/>
    <property type="evidence" value="ECO:0007669"/>
    <property type="project" value="TreeGrafter"/>
</dbReference>
<dbReference type="GO" id="GO:0004372">
    <property type="term" value="F:glycine hydroxymethyltransferase activity"/>
    <property type="evidence" value="ECO:0007669"/>
    <property type="project" value="UniProtKB-UniRule"/>
</dbReference>
<dbReference type="GO" id="GO:0030170">
    <property type="term" value="F:pyridoxal phosphate binding"/>
    <property type="evidence" value="ECO:0007669"/>
    <property type="project" value="UniProtKB-UniRule"/>
</dbReference>
<dbReference type="GO" id="GO:0019264">
    <property type="term" value="P:glycine biosynthetic process from serine"/>
    <property type="evidence" value="ECO:0007669"/>
    <property type="project" value="UniProtKB-UniRule"/>
</dbReference>
<dbReference type="GO" id="GO:0035999">
    <property type="term" value="P:tetrahydrofolate interconversion"/>
    <property type="evidence" value="ECO:0007669"/>
    <property type="project" value="UniProtKB-UniRule"/>
</dbReference>
<dbReference type="CDD" id="cd00378">
    <property type="entry name" value="SHMT"/>
    <property type="match status" value="1"/>
</dbReference>
<dbReference type="FunFam" id="3.40.640.10:FF:000001">
    <property type="entry name" value="Serine hydroxymethyltransferase"/>
    <property type="match status" value="1"/>
</dbReference>
<dbReference type="FunFam" id="3.90.1150.10:FF:000003">
    <property type="entry name" value="Serine hydroxymethyltransferase"/>
    <property type="match status" value="1"/>
</dbReference>
<dbReference type="Gene3D" id="3.90.1150.10">
    <property type="entry name" value="Aspartate Aminotransferase, domain 1"/>
    <property type="match status" value="1"/>
</dbReference>
<dbReference type="Gene3D" id="3.40.640.10">
    <property type="entry name" value="Type I PLP-dependent aspartate aminotransferase-like (Major domain)"/>
    <property type="match status" value="1"/>
</dbReference>
<dbReference type="HAMAP" id="MF_00051">
    <property type="entry name" value="SHMT"/>
    <property type="match status" value="1"/>
</dbReference>
<dbReference type="InterPro" id="IPR015424">
    <property type="entry name" value="PyrdxlP-dep_Trfase"/>
</dbReference>
<dbReference type="InterPro" id="IPR015421">
    <property type="entry name" value="PyrdxlP-dep_Trfase_major"/>
</dbReference>
<dbReference type="InterPro" id="IPR015422">
    <property type="entry name" value="PyrdxlP-dep_Trfase_small"/>
</dbReference>
<dbReference type="InterPro" id="IPR001085">
    <property type="entry name" value="Ser_HO-MeTrfase"/>
</dbReference>
<dbReference type="InterPro" id="IPR049943">
    <property type="entry name" value="Ser_HO-MeTrfase-like"/>
</dbReference>
<dbReference type="InterPro" id="IPR019798">
    <property type="entry name" value="Ser_HO-MeTrfase_PLP_BS"/>
</dbReference>
<dbReference type="InterPro" id="IPR039429">
    <property type="entry name" value="SHMT-like_dom"/>
</dbReference>
<dbReference type="NCBIfam" id="NF000586">
    <property type="entry name" value="PRK00011.1"/>
    <property type="match status" value="1"/>
</dbReference>
<dbReference type="PANTHER" id="PTHR11680">
    <property type="entry name" value="SERINE HYDROXYMETHYLTRANSFERASE"/>
    <property type="match status" value="1"/>
</dbReference>
<dbReference type="PANTHER" id="PTHR11680:SF50">
    <property type="entry name" value="SERINE HYDROXYMETHYLTRANSFERASE"/>
    <property type="match status" value="1"/>
</dbReference>
<dbReference type="Pfam" id="PF00464">
    <property type="entry name" value="SHMT"/>
    <property type="match status" value="1"/>
</dbReference>
<dbReference type="PIRSF" id="PIRSF000412">
    <property type="entry name" value="SHMT"/>
    <property type="match status" value="1"/>
</dbReference>
<dbReference type="SUPFAM" id="SSF53383">
    <property type="entry name" value="PLP-dependent transferases"/>
    <property type="match status" value="1"/>
</dbReference>
<dbReference type="PROSITE" id="PS00096">
    <property type="entry name" value="SHMT"/>
    <property type="match status" value="1"/>
</dbReference>
<sequence length="417" mass="44912">MFSRDVRLETYDPELAKAIAAEAGRQEDHVELIASENYCSQLVMEAQGSQLTNKYAEGYPGKRYYGGCAFVDIAEQLAIDRIKQVFDADYANVQPHSGSQANQAVYLALLQPGDTILGMSLAHGGHLTHGAKANVSGKLFNAVQYGVNEQGLIDYDEVQRLATEHTPKMVVAGFSAYSQKIDWARFRAIADSVGAYLFVDMAHIAGLVAAGVYPSPMEHAHVVTSTTHKTLRGPRGGIIVAKGASEELQKKLQSIVFPGIQGGPLMHVIAAKAVAFKEALEPAFKTYQQQVVKNAQAMANTLIARGYKIVSGGTENHLMLVDMIGRDVSGKDAEAALGKAHITVNKNAVPNDPRSPFVTSGLRLGTPAITTRGYKEPDSIDLANWIADVLDAPTDEAVLAKVRDAVTAQCKRYPVYG</sequence>
<comment type="function">
    <text evidence="1">Catalyzes the reversible interconversion of serine and glycine with tetrahydrofolate (THF) serving as the one-carbon carrier. This reaction serves as the major source of one-carbon groups required for the biosynthesis of purines, thymidylate, methionine, and other important biomolecules. Also exhibits THF-independent aldolase activity toward beta-hydroxyamino acids, producing glycine and aldehydes, via a retro-aldol mechanism.</text>
</comment>
<comment type="catalytic activity">
    <reaction evidence="1">
        <text>(6R)-5,10-methylene-5,6,7,8-tetrahydrofolate + glycine + H2O = (6S)-5,6,7,8-tetrahydrofolate + L-serine</text>
        <dbReference type="Rhea" id="RHEA:15481"/>
        <dbReference type="ChEBI" id="CHEBI:15377"/>
        <dbReference type="ChEBI" id="CHEBI:15636"/>
        <dbReference type="ChEBI" id="CHEBI:33384"/>
        <dbReference type="ChEBI" id="CHEBI:57305"/>
        <dbReference type="ChEBI" id="CHEBI:57453"/>
        <dbReference type="EC" id="2.1.2.1"/>
    </reaction>
</comment>
<comment type="cofactor">
    <cofactor evidence="1">
        <name>pyridoxal 5'-phosphate</name>
        <dbReference type="ChEBI" id="CHEBI:597326"/>
    </cofactor>
</comment>
<comment type="pathway">
    <text evidence="1">One-carbon metabolism; tetrahydrofolate interconversion.</text>
</comment>
<comment type="pathway">
    <text evidence="1">Amino-acid biosynthesis; glycine biosynthesis; glycine from L-serine: step 1/1.</text>
</comment>
<comment type="subunit">
    <text evidence="1">Homodimer.</text>
</comment>
<comment type="subcellular location">
    <subcellularLocation>
        <location evidence="1">Cytoplasm</location>
    </subcellularLocation>
</comment>
<comment type="similarity">
    <text evidence="1">Belongs to the SHMT family.</text>
</comment>
<name>GLYA_XANOM</name>
<proteinExistence type="inferred from homology"/>
<keyword id="KW-0028">Amino-acid biosynthesis</keyword>
<keyword id="KW-0963">Cytoplasm</keyword>
<keyword id="KW-0554">One-carbon metabolism</keyword>
<keyword id="KW-0663">Pyridoxal phosphate</keyword>
<keyword id="KW-0808">Transferase</keyword>
<feature type="chain" id="PRO_0000235052" description="Serine hydroxymethyltransferase">
    <location>
        <begin position="1"/>
        <end position="417"/>
    </location>
</feature>
<feature type="binding site" evidence="1">
    <location>
        <position position="121"/>
    </location>
    <ligand>
        <name>(6S)-5,6,7,8-tetrahydrofolate</name>
        <dbReference type="ChEBI" id="CHEBI:57453"/>
    </ligand>
</feature>
<feature type="binding site" evidence="1">
    <location>
        <begin position="125"/>
        <end position="127"/>
    </location>
    <ligand>
        <name>(6S)-5,6,7,8-tetrahydrofolate</name>
        <dbReference type="ChEBI" id="CHEBI:57453"/>
    </ligand>
</feature>
<feature type="binding site" evidence="1">
    <location>
        <begin position="355"/>
        <end position="357"/>
    </location>
    <ligand>
        <name>(6S)-5,6,7,8-tetrahydrofolate</name>
        <dbReference type="ChEBI" id="CHEBI:57453"/>
    </ligand>
</feature>
<feature type="site" description="Plays an important role in substrate specificity" evidence="1">
    <location>
        <position position="228"/>
    </location>
</feature>
<feature type="modified residue" description="N6-(pyridoxal phosphate)lysine" evidence="1">
    <location>
        <position position="229"/>
    </location>
</feature>
<protein>
    <recommendedName>
        <fullName evidence="1">Serine hydroxymethyltransferase</fullName>
        <shortName evidence="1">SHMT</shortName>
        <shortName evidence="1">Serine methylase</shortName>
        <ecNumber evidence="1">2.1.2.1</ecNumber>
    </recommendedName>
</protein>
<reference key="1">
    <citation type="journal article" date="2005" name="Jpn. Agric. Res. Q.">
        <title>Genome sequence of Xanthomonas oryzae pv. oryzae suggests contribution of large numbers of effector genes and insertion sequences to its race diversity.</title>
        <authorList>
            <person name="Ochiai H."/>
            <person name="Inoue Y."/>
            <person name="Takeya M."/>
            <person name="Sasaki A."/>
            <person name="Kaku H."/>
        </authorList>
    </citation>
    <scope>NUCLEOTIDE SEQUENCE [LARGE SCALE GENOMIC DNA]</scope>
    <source>
        <strain>MAFF 311018</strain>
    </source>
</reference>
<organism>
    <name type="scientific">Xanthomonas oryzae pv. oryzae (strain MAFF 311018)</name>
    <dbReference type="NCBI Taxonomy" id="342109"/>
    <lineage>
        <taxon>Bacteria</taxon>
        <taxon>Pseudomonadati</taxon>
        <taxon>Pseudomonadota</taxon>
        <taxon>Gammaproteobacteria</taxon>
        <taxon>Lysobacterales</taxon>
        <taxon>Lysobacteraceae</taxon>
        <taxon>Xanthomonas</taxon>
    </lineage>
</organism>
<evidence type="ECO:0000255" key="1">
    <source>
        <dbReference type="HAMAP-Rule" id="MF_00051"/>
    </source>
</evidence>
<gene>
    <name evidence="1" type="primary">glyA</name>
    <name type="ordered locus">XOO3639</name>
</gene>
<accession>Q2NZ83</accession>